<proteinExistence type="inferred from homology"/>
<dbReference type="EC" id="1.2.1.70" evidence="1"/>
<dbReference type="EMBL" id="AM167904">
    <property type="protein sequence ID" value="CAJ47901.1"/>
    <property type="molecule type" value="Genomic_DNA"/>
</dbReference>
<dbReference type="RefSeq" id="WP_012415998.1">
    <property type="nucleotide sequence ID" value="NC_010645.1"/>
</dbReference>
<dbReference type="SMR" id="Q2KZZ5"/>
<dbReference type="STRING" id="360910.BAV0296"/>
<dbReference type="GeneID" id="92936453"/>
<dbReference type="KEGG" id="bav:BAV0296"/>
<dbReference type="eggNOG" id="COG0373">
    <property type="taxonomic scope" value="Bacteria"/>
</dbReference>
<dbReference type="HOGENOM" id="CLU_035113_2_2_4"/>
<dbReference type="OrthoDB" id="110209at2"/>
<dbReference type="UniPathway" id="UPA00251">
    <property type="reaction ID" value="UER00316"/>
</dbReference>
<dbReference type="Proteomes" id="UP000001977">
    <property type="component" value="Chromosome"/>
</dbReference>
<dbReference type="GO" id="GO:0008883">
    <property type="term" value="F:glutamyl-tRNA reductase activity"/>
    <property type="evidence" value="ECO:0007669"/>
    <property type="project" value="UniProtKB-UniRule"/>
</dbReference>
<dbReference type="GO" id="GO:0050661">
    <property type="term" value="F:NADP binding"/>
    <property type="evidence" value="ECO:0007669"/>
    <property type="project" value="InterPro"/>
</dbReference>
<dbReference type="GO" id="GO:0019353">
    <property type="term" value="P:protoporphyrinogen IX biosynthetic process from glutamate"/>
    <property type="evidence" value="ECO:0007669"/>
    <property type="project" value="TreeGrafter"/>
</dbReference>
<dbReference type="CDD" id="cd05213">
    <property type="entry name" value="NAD_bind_Glutamyl_tRNA_reduct"/>
    <property type="match status" value="1"/>
</dbReference>
<dbReference type="FunFam" id="3.30.460.30:FF:000001">
    <property type="entry name" value="Glutamyl-tRNA reductase"/>
    <property type="match status" value="1"/>
</dbReference>
<dbReference type="FunFam" id="3.40.50.720:FF:000031">
    <property type="entry name" value="Glutamyl-tRNA reductase"/>
    <property type="match status" value="1"/>
</dbReference>
<dbReference type="Gene3D" id="3.30.460.30">
    <property type="entry name" value="Glutamyl-tRNA reductase, N-terminal domain"/>
    <property type="match status" value="1"/>
</dbReference>
<dbReference type="Gene3D" id="3.40.50.720">
    <property type="entry name" value="NAD(P)-binding Rossmann-like Domain"/>
    <property type="match status" value="1"/>
</dbReference>
<dbReference type="HAMAP" id="MF_00087">
    <property type="entry name" value="Glu_tRNA_reductase"/>
    <property type="match status" value="1"/>
</dbReference>
<dbReference type="InterPro" id="IPR000343">
    <property type="entry name" value="4pyrrol_synth_GluRdtase"/>
</dbReference>
<dbReference type="InterPro" id="IPR015896">
    <property type="entry name" value="4pyrrol_synth_GluRdtase_dimer"/>
</dbReference>
<dbReference type="InterPro" id="IPR015895">
    <property type="entry name" value="4pyrrol_synth_GluRdtase_N"/>
</dbReference>
<dbReference type="InterPro" id="IPR018214">
    <property type="entry name" value="GluRdtase_CS"/>
</dbReference>
<dbReference type="InterPro" id="IPR036453">
    <property type="entry name" value="GluRdtase_dimer_dom_sf"/>
</dbReference>
<dbReference type="InterPro" id="IPR036343">
    <property type="entry name" value="GluRdtase_N_sf"/>
</dbReference>
<dbReference type="InterPro" id="IPR036291">
    <property type="entry name" value="NAD(P)-bd_dom_sf"/>
</dbReference>
<dbReference type="InterPro" id="IPR006151">
    <property type="entry name" value="Shikm_DH/Glu-tRNA_Rdtase"/>
</dbReference>
<dbReference type="NCBIfam" id="TIGR01035">
    <property type="entry name" value="hemA"/>
    <property type="match status" value="1"/>
</dbReference>
<dbReference type="PANTHER" id="PTHR43013">
    <property type="entry name" value="GLUTAMYL-TRNA REDUCTASE"/>
    <property type="match status" value="1"/>
</dbReference>
<dbReference type="PANTHER" id="PTHR43013:SF1">
    <property type="entry name" value="GLUTAMYL-TRNA REDUCTASE"/>
    <property type="match status" value="1"/>
</dbReference>
<dbReference type="Pfam" id="PF00745">
    <property type="entry name" value="GlutR_dimer"/>
    <property type="match status" value="1"/>
</dbReference>
<dbReference type="Pfam" id="PF05201">
    <property type="entry name" value="GlutR_N"/>
    <property type="match status" value="1"/>
</dbReference>
<dbReference type="Pfam" id="PF01488">
    <property type="entry name" value="Shikimate_DH"/>
    <property type="match status" value="1"/>
</dbReference>
<dbReference type="PIRSF" id="PIRSF000445">
    <property type="entry name" value="4pyrrol_synth_GluRdtase"/>
    <property type="match status" value="1"/>
</dbReference>
<dbReference type="SUPFAM" id="SSF69742">
    <property type="entry name" value="Glutamyl tRNA-reductase catalytic, N-terminal domain"/>
    <property type="match status" value="1"/>
</dbReference>
<dbReference type="SUPFAM" id="SSF69075">
    <property type="entry name" value="Glutamyl tRNA-reductase dimerization domain"/>
    <property type="match status" value="1"/>
</dbReference>
<dbReference type="SUPFAM" id="SSF51735">
    <property type="entry name" value="NAD(P)-binding Rossmann-fold domains"/>
    <property type="match status" value="1"/>
</dbReference>
<dbReference type="PROSITE" id="PS00747">
    <property type="entry name" value="GLUTR"/>
    <property type="match status" value="1"/>
</dbReference>
<reference key="1">
    <citation type="journal article" date="2006" name="J. Bacteriol.">
        <title>Comparison of the genome sequence of the poultry pathogen Bordetella avium with those of B. bronchiseptica, B. pertussis, and B. parapertussis reveals extensive diversity in surface structures associated with host interaction.</title>
        <authorList>
            <person name="Sebaihia M."/>
            <person name="Preston A."/>
            <person name="Maskell D.J."/>
            <person name="Kuzmiak H."/>
            <person name="Connell T.D."/>
            <person name="King N.D."/>
            <person name="Orndorff P.E."/>
            <person name="Miyamoto D.M."/>
            <person name="Thomson N.R."/>
            <person name="Harris D."/>
            <person name="Goble A."/>
            <person name="Lord A."/>
            <person name="Murphy L."/>
            <person name="Quail M.A."/>
            <person name="Rutter S."/>
            <person name="Squares R."/>
            <person name="Squares S."/>
            <person name="Woodward J."/>
            <person name="Parkhill J."/>
            <person name="Temple L.M."/>
        </authorList>
    </citation>
    <scope>NUCLEOTIDE SEQUENCE [LARGE SCALE GENOMIC DNA]</scope>
    <source>
        <strain>197N</strain>
    </source>
</reference>
<comment type="function">
    <text evidence="1">Catalyzes the NADPH-dependent reduction of glutamyl-tRNA(Glu) to glutamate 1-semialdehyde (GSA).</text>
</comment>
<comment type="catalytic activity">
    <reaction evidence="1">
        <text>(S)-4-amino-5-oxopentanoate + tRNA(Glu) + NADP(+) = L-glutamyl-tRNA(Glu) + NADPH + H(+)</text>
        <dbReference type="Rhea" id="RHEA:12344"/>
        <dbReference type="Rhea" id="RHEA-COMP:9663"/>
        <dbReference type="Rhea" id="RHEA-COMP:9680"/>
        <dbReference type="ChEBI" id="CHEBI:15378"/>
        <dbReference type="ChEBI" id="CHEBI:57501"/>
        <dbReference type="ChEBI" id="CHEBI:57783"/>
        <dbReference type="ChEBI" id="CHEBI:58349"/>
        <dbReference type="ChEBI" id="CHEBI:78442"/>
        <dbReference type="ChEBI" id="CHEBI:78520"/>
        <dbReference type="EC" id="1.2.1.70"/>
    </reaction>
</comment>
<comment type="pathway">
    <text evidence="1">Porphyrin-containing compound metabolism; protoporphyrin-IX biosynthesis; 5-aminolevulinate from L-glutamyl-tRNA(Glu): step 1/2.</text>
</comment>
<comment type="subunit">
    <text evidence="1">Homodimer.</text>
</comment>
<comment type="domain">
    <text evidence="1">Possesses an unusual extended V-shaped dimeric structure with each monomer consisting of three distinct domains arranged along a curved 'spinal' alpha-helix. The N-terminal catalytic domain specifically recognizes the glutamate moiety of the substrate. The second domain is the NADPH-binding domain, and the third C-terminal domain is responsible for dimerization.</text>
</comment>
<comment type="miscellaneous">
    <text evidence="1">During catalysis, the active site Cys acts as a nucleophile attacking the alpha-carbonyl group of tRNA-bound glutamate with the formation of a thioester intermediate between enzyme and glutamate, and the concomitant release of tRNA(Glu). The thioester intermediate is finally reduced by direct hydride transfer from NADPH, to form the product GSA.</text>
</comment>
<comment type="similarity">
    <text evidence="1">Belongs to the glutamyl-tRNA reductase family.</text>
</comment>
<keyword id="KW-0521">NADP</keyword>
<keyword id="KW-0560">Oxidoreductase</keyword>
<keyword id="KW-0627">Porphyrin biosynthesis</keyword>
<keyword id="KW-1185">Reference proteome</keyword>
<protein>
    <recommendedName>
        <fullName evidence="1">Glutamyl-tRNA reductase</fullName>
        <shortName evidence="1">GluTR</shortName>
        <ecNumber evidence="1">1.2.1.70</ecNumber>
    </recommendedName>
</protein>
<organism>
    <name type="scientific">Bordetella avium (strain 197N)</name>
    <dbReference type="NCBI Taxonomy" id="360910"/>
    <lineage>
        <taxon>Bacteria</taxon>
        <taxon>Pseudomonadati</taxon>
        <taxon>Pseudomonadota</taxon>
        <taxon>Betaproteobacteria</taxon>
        <taxon>Burkholderiales</taxon>
        <taxon>Alcaligenaceae</taxon>
        <taxon>Bordetella</taxon>
    </lineage>
</organism>
<name>HEM1_BORA1</name>
<accession>Q2KZZ5</accession>
<feature type="chain" id="PRO_0000335012" description="Glutamyl-tRNA reductase">
    <location>
        <begin position="1"/>
        <end position="424"/>
    </location>
</feature>
<feature type="active site" description="Nucleophile" evidence="1">
    <location>
        <position position="54"/>
    </location>
</feature>
<feature type="binding site" evidence="1">
    <location>
        <begin position="53"/>
        <end position="56"/>
    </location>
    <ligand>
        <name>substrate</name>
    </ligand>
</feature>
<feature type="binding site" evidence="1">
    <location>
        <position position="111"/>
    </location>
    <ligand>
        <name>substrate</name>
    </ligand>
</feature>
<feature type="binding site" evidence="1">
    <location>
        <begin position="116"/>
        <end position="118"/>
    </location>
    <ligand>
        <name>substrate</name>
    </ligand>
</feature>
<feature type="binding site" evidence="1">
    <location>
        <position position="122"/>
    </location>
    <ligand>
        <name>substrate</name>
    </ligand>
</feature>
<feature type="binding site" evidence="1">
    <location>
        <begin position="191"/>
        <end position="196"/>
    </location>
    <ligand>
        <name>NADP(+)</name>
        <dbReference type="ChEBI" id="CHEBI:58349"/>
    </ligand>
</feature>
<feature type="site" description="Important for activity" evidence="1">
    <location>
        <position position="101"/>
    </location>
</feature>
<evidence type="ECO:0000255" key="1">
    <source>
        <dbReference type="HAMAP-Rule" id="MF_00087"/>
    </source>
</evidence>
<sequence>MSVAVLAFGLNHTSAPVSVRERVSMPVDLVKPALAGLRSAFGGAVREAAILSTCNRTEVYCAADAAVAEQLPIWLADHHCMEAGSLHPHLYRLHQNDAVRHAFRVASGLDSMVLGEPQILGQMKDAVRAAEEAGSLGTLLHQLFQRTFAVAKEVRSQTEIGAHSVSMAAAAVRLAERVFGDLGQARTLFIGAGEMIELCATHFAAQHPRSMVVANRTAERAESLAGRFSAGTMKLADLTERLAEFDVVVSCTASSLPILGLGMVERATRQRRHRPMVMIDLAVPRDIEPEVGRLDDVYLYSVDDLGRLVQSGTDARRAAVVQAEAIIETRVQGFMHWMQSREVVPVIRGLHQAAEDVQAAELERARRLLARGESPEAVLEQLAHGLTQKYLHGPLAALNRSAGDERKQLLAWMPRLFPGRDSRR</sequence>
<gene>
    <name evidence="1" type="primary">hemA</name>
    <name type="ordered locus">BAV0296</name>
</gene>